<accession>B5R5G6</accession>
<protein>
    <recommendedName>
        <fullName evidence="1">Orotate phosphoribosyltransferase</fullName>
        <shortName evidence="1">OPRT</shortName>
        <shortName evidence="1">OPRTase</shortName>
        <ecNumber evidence="1">2.4.2.10</ecNumber>
    </recommendedName>
</protein>
<organism>
    <name type="scientific">Salmonella enteritidis PT4 (strain P125109)</name>
    <dbReference type="NCBI Taxonomy" id="550537"/>
    <lineage>
        <taxon>Bacteria</taxon>
        <taxon>Pseudomonadati</taxon>
        <taxon>Pseudomonadota</taxon>
        <taxon>Gammaproteobacteria</taxon>
        <taxon>Enterobacterales</taxon>
        <taxon>Enterobacteriaceae</taxon>
        <taxon>Salmonella</taxon>
    </lineage>
</organism>
<reference key="1">
    <citation type="journal article" date="2008" name="Genome Res.">
        <title>Comparative genome analysis of Salmonella enteritidis PT4 and Salmonella gallinarum 287/91 provides insights into evolutionary and host adaptation pathways.</title>
        <authorList>
            <person name="Thomson N.R."/>
            <person name="Clayton D.J."/>
            <person name="Windhorst D."/>
            <person name="Vernikos G."/>
            <person name="Davidson S."/>
            <person name="Churcher C."/>
            <person name="Quail M.A."/>
            <person name="Stevens M."/>
            <person name="Jones M.A."/>
            <person name="Watson M."/>
            <person name="Barron A."/>
            <person name="Layton A."/>
            <person name="Pickard D."/>
            <person name="Kingsley R.A."/>
            <person name="Bignell A."/>
            <person name="Clark L."/>
            <person name="Harris B."/>
            <person name="Ormond D."/>
            <person name="Abdellah Z."/>
            <person name="Brooks K."/>
            <person name="Cherevach I."/>
            <person name="Chillingworth T."/>
            <person name="Woodward J."/>
            <person name="Norberczak H."/>
            <person name="Lord A."/>
            <person name="Arrowsmith C."/>
            <person name="Jagels K."/>
            <person name="Moule S."/>
            <person name="Mungall K."/>
            <person name="Saunders M."/>
            <person name="Whitehead S."/>
            <person name="Chabalgoity J.A."/>
            <person name="Maskell D."/>
            <person name="Humphreys T."/>
            <person name="Roberts M."/>
            <person name="Barrow P.A."/>
            <person name="Dougan G."/>
            <person name="Parkhill J."/>
        </authorList>
    </citation>
    <scope>NUCLEOTIDE SEQUENCE [LARGE SCALE GENOMIC DNA]</scope>
    <source>
        <strain>P125109</strain>
    </source>
</reference>
<evidence type="ECO:0000255" key="1">
    <source>
        <dbReference type="HAMAP-Rule" id="MF_01208"/>
    </source>
</evidence>
<sequence>MKPYQRQFIEFALNKQVLKFGEFTLKSGRKSPYFFNAGLFNTGRDLALLGRFYAEALVDSGIEFDLLFGPAYKGIPIATTTAVALAEHHDKDLPYCFNRKEAKDHGEGGSLVGSALQGRVMLVDDVITAGTAIRESMEIIQAHGATLAGVLISLDRQERGRGEISAIQEVERDYGCKVISIITLKDLIAYLEEKPDMAEHLAAVRAYREEFGV</sequence>
<dbReference type="EC" id="2.4.2.10" evidence="1"/>
<dbReference type="EMBL" id="AM933172">
    <property type="protein sequence ID" value="CAR35134.1"/>
    <property type="molecule type" value="Genomic_DNA"/>
</dbReference>
<dbReference type="RefSeq" id="WP_000806167.1">
    <property type="nucleotide sequence ID" value="NC_011294.1"/>
</dbReference>
<dbReference type="SMR" id="B5R5G6"/>
<dbReference type="KEGG" id="set:SEN3555"/>
<dbReference type="HOGENOM" id="CLU_074878_0_1_6"/>
<dbReference type="UniPathway" id="UPA00070">
    <property type="reaction ID" value="UER00119"/>
</dbReference>
<dbReference type="Proteomes" id="UP000000613">
    <property type="component" value="Chromosome"/>
</dbReference>
<dbReference type="GO" id="GO:0005737">
    <property type="term" value="C:cytoplasm"/>
    <property type="evidence" value="ECO:0007669"/>
    <property type="project" value="TreeGrafter"/>
</dbReference>
<dbReference type="GO" id="GO:0000287">
    <property type="term" value="F:magnesium ion binding"/>
    <property type="evidence" value="ECO:0007669"/>
    <property type="project" value="UniProtKB-UniRule"/>
</dbReference>
<dbReference type="GO" id="GO:0004588">
    <property type="term" value="F:orotate phosphoribosyltransferase activity"/>
    <property type="evidence" value="ECO:0007669"/>
    <property type="project" value="UniProtKB-UniRule"/>
</dbReference>
<dbReference type="GO" id="GO:0006207">
    <property type="term" value="P:'de novo' pyrimidine nucleobase biosynthetic process"/>
    <property type="evidence" value="ECO:0007669"/>
    <property type="project" value="TreeGrafter"/>
</dbReference>
<dbReference type="GO" id="GO:0044205">
    <property type="term" value="P:'de novo' UMP biosynthetic process"/>
    <property type="evidence" value="ECO:0007669"/>
    <property type="project" value="UniProtKB-UniRule"/>
</dbReference>
<dbReference type="GO" id="GO:0046132">
    <property type="term" value="P:pyrimidine ribonucleoside biosynthetic process"/>
    <property type="evidence" value="ECO:0007669"/>
    <property type="project" value="TreeGrafter"/>
</dbReference>
<dbReference type="CDD" id="cd06223">
    <property type="entry name" value="PRTases_typeI"/>
    <property type="match status" value="1"/>
</dbReference>
<dbReference type="FunFam" id="3.40.50.2020:FF:000008">
    <property type="entry name" value="Orotate phosphoribosyltransferase"/>
    <property type="match status" value="1"/>
</dbReference>
<dbReference type="Gene3D" id="3.40.50.2020">
    <property type="match status" value="1"/>
</dbReference>
<dbReference type="HAMAP" id="MF_01208">
    <property type="entry name" value="PyrE"/>
    <property type="match status" value="1"/>
</dbReference>
<dbReference type="InterPro" id="IPR023031">
    <property type="entry name" value="OPRT"/>
</dbReference>
<dbReference type="InterPro" id="IPR004467">
    <property type="entry name" value="Or_phspho_trans_dom"/>
</dbReference>
<dbReference type="InterPro" id="IPR000836">
    <property type="entry name" value="PRibTrfase_dom"/>
</dbReference>
<dbReference type="InterPro" id="IPR029057">
    <property type="entry name" value="PRTase-like"/>
</dbReference>
<dbReference type="NCBIfam" id="TIGR00336">
    <property type="entry name" value="pyrE"/>
    <property type="match status" value="1"/>
</dbReference>
<dbReference type="PANTHER" id="PTHR46683">
    <property type="entry name" value="OROTATE PHOSPHORIBOSYLTRANSFERASE 1-RELATED"/>
    <property type="match status" value="1"/>
</dbReference>
<dbReference type="PANTHER" id="PTHR46683:SF1">
    <property type="entry name" value="OROTATE PHOSPHORIBOSYLTRANSFERASE 1-RELATED"/>
    <property type="match status" value="1"/>
</dbReference>
<dbReference type="Pfam" id="PF00156">
    <property type="entry name" value="Pribosyltran"/>
    <property type="match status" value="1"/>
</dbReference>
<dbReference type="SUPFAM" id="SSF53271">
    <property type="entry name" value="PRTase-like"/>
    <property type="match status" value="1"/>
</dbReference>
<dbReference type="PROSITE" id="PS00103">
    <property type="entry name" value="PUR_PYR_PR_TRANSFER"/>
    <property type="match status" value="1"/>
</dbReference>
<feature type="chain" id="PRO_1000138826" description="Orotate phosphoribosyltransferase">
    <location>
        <begin position="1"/>
        <end position="213"/>
    </location>
</feature>
<feature type="binding site" description="in other chain" evidence="1">
    <location>
        <position position="26"/>
    </location>
    <ligand>
        <name>5-phospho-alpha-D-ribose 1-diphosphate</name>
        <dbReference type="ChEBI" id="CHEBI:58017"/>
        <note>ligand shared between dimeric partners</note>
    </ligand>
</feature>
<feature type="binding site" evidence="1">
    <location>
        <begin position="34"/>
        <end position="35"/>
    </location>
    <ligand>
        <name>orotate</name>
        <dbReference type="ChEBI" id="CHEBI:30839"/>
    </ligand>
</feature>
<feature type="binding site" description="in other chain" evidence="1">
    <location>
        <begin position="72"/>
        <end position="73"/>
    </location>
    <ligand>
        <name>5-phospho-alpha-D-ribose 1-diphosphate</name>
        <dbReference type="ChEBI" id="CHEBI:58017"/>
        <note>ligand shared between dimeric partners</note>
    </ligand>
</feature>
<feature type="binding site" evidence="1">
    <location>
        <position position="99"/>
    </location>
    <ligand>
        <name>5-phospho-alpha-D-ribose 1-diphosphate</name>
        <dbReference type="ChEBI" id="CHEBI:58017"/>
        <note>ligand shared between dimeric partners</note>
    </ligand>
</feature>
<feature type="binding site" description="in other chain" evidence="1">
    <location>
        <position position="100"/>
    </location>
    <ligand>
        <name>5-phospho-alpha-D-ribose 1-diphosphate</name>
        <dbReference type="ChEBI" id="CHEBI:58017"/>
        <note>ligand shared between dimeric partners</note>
    </ligand>
</feature>
<feature type="binding site" evidence="1">
    <location>
        <position position="103"/>
    </location>
    <ligand>
        <name>5-phospho-alpha-D-ribose 1-diphosphate</name>
        <dbReference type="ChEBI" id="CHEBI:58017"/>
        <note>ligand shared between dimeric partners</note>
    </ligand>
</feature>
<feature type="binding site" evidence="1">
    <location>
        <position position="105"/>
    </location>
    <ligand>
        <name>5-phospho-alpha-D-ribose 1-diphosphate</name>
        <dbReference type="ChEBI" id="CHEBI:58017"/>
        <note>ligand shared between dimeric partners</note>
    </ligand>
</feature>
<feature type="binding site" description="in other chain" evidence="1">
    <location>
        <begin position="124"/>
        <end position="132"/>
    </location>
    <ligand>
        <name>5-phospho-alpha-D-ribose 1-diphosphate</name>
        <dbReference type="ChEBI" id="CHEBI:58017"/>
        <note>ligand shared between dimeric partners</note>
    </ligand>
</feature>
<feature type="binding site" evidence="1">
    <location>
        <position position="128"/>
    </location>
    <ligand>
        <name>orotate</name>
        <dbReference type="ChEBI" id="CHEBI:30839"/>
    </ligand>
</feature>
<feature type="binding site" evidence="1">
    <location>
        <position position="156"/>
    </location>
    <ligand>
        <name>orotate</name>
        <dbReference type="ChEBI" id="CHEBI:30839"/>
    </ligand>
</feature>
<gene>
    <name evidence="1" type="primary">pyrE</name>
    <name type="ordered locus">SEN3555</name>
</gene>
<proteinExistence type="inferred from homology"/>
<name>PYRE_SALEP</name>
<comment type="function">
    <text evidence="1">Catalyzes the transfer of a ribosyl phosphate group from 5-phosphoribose 1-diphosphate to orotate, leading to the formation of orotidine monophosphate (OMP).</text>
</comment>
<comment type="catalytic activity">
    <reaction evidence="1">
        <text>orotidine 5'-phosphate + diphosphate = orotate + 5-phospho-alpha-D-ribose 1-diphosphate</text>
        <dbReference type="Rhea" id="RHEA:10380"/>
        <dbReference type="ChEBI" id="CHEBI:30839"/>
        <dbReference type="ChEBI" id="CHEBI:33019"/>
        <dbReference type="ChEBI" id="CHEBI:57538"/>
        <dbReference type="ChEBI" id="CHEBI:58017"/>
        <dbReference type="EC" id="2.4.2.10"/>
    </reaction>
</comment>
<comment type="cofactor">
    <cofactor evidence="1">
        <name>Mg(2+)</name>
        <dbReference type="ChEBI" id="CHEBI:18420"/>
    </cofactor>
</comment>
<comment type="pathway">
    <text evidence="1">Pyrimidine metabolism; UMP biosynthesis via de novo pathway; UMP from orotate: step 1/2.</text>
</comment>
<comment type="subunit">
    <text evidence="1">Homodimer.</text>
</comment>
<comment type="similarity">
    <text evidence="1">Belongs to the purine/pyrimidine phosphoribosyltransferase family. PyrE subfamily.</text>
</comment>
<keyword id="KW-0328">Glycosyltransferase</keyword>
<keyword id="KW-0460">Magnesium</keyword>
<keyword id="KW-0665">Pyrimidine biosynthesis</keyword>
<keyword id="KW-0808">Transferase</keyword>